<reference key="1">
    <citation type="journal article" date="2009" name="PLoS Biol.">
        <title>Lineage-specific biology revealed by a finished genome assembly of the mouse.</title>
        <authorList>
            <person name="Church D.M."/>
            <person name="Goodstadt L."/>
            <person name="Hillier L.W."/>
            <person name="Zody M.C."/>
            <person name="Goldstein S."/>
            <person name="She X."/>
            <person name="Bult C.J."/>
            <person name="Agarwala R."/>
            <person name="Cherry J.L."/>
            <person name="DiCuccio M."/>
            <person name="Hlavina W."/>
            <person name="Kapustin Y."/>
            <person name="Meric P."/>
            <person name="Maglott D."/>
            <person name="Birtle Z."/>
            <person name="Marques A.C."/>
            <person name="Graves T."/>
            <person name="Zhou S."/>
            <person name="Teague B."/>
            <person name="Potamousis K."/>
            <person name="Churas C."/>
            <person name="Place M."/>
            <person name="Herschleb J."/>
            <person name="Runnheim R."/>
            <person name="Forrest D."/>
            <person name="Amos-Landgraf J."/>
            <person name="Schwartz D.C."/>
            <person name="Cheng Z."/>
            <person name="Lindblad-Toh K."/>
            <person name="Eichler E.E."/>
            <person name="Ponting C.P."/>
        </authorList>
    </citation>
    <scope>NUCLEOTIDE SEQUENCE [LARGE SCALE GENOMIC DNA]</scope>
</reference>
<reference key="2">
    <citation type="submission" date="2009-01" db="EMBL/GenBank/DDBJ databases">
        <authorList>
            <person name="Mural R.J."/>
            <person name="Adams M.D."/>
            <person name="Myers E.W."/>
            <person name="Smith H.O."/>
            <person name="Venter J.C."/>
        </authorList>
    </citation>
    <scope>NUCLEOTIDE SEQUENCE [LARGE SCALE GENOMIC DNA]</scope>
</reference>
<reference key="3">
    <citation type="journal article" date="2004" name="Genome Res.">
        <title>The status, quality, and expansion of the NIH full-length cDNA project: the Mammalian Gene Collection (MGC).</title>
        <authorList>
            <consortium name="The MGC Project Team"/>
        </authorList>
    </citation>
    <scope>NUCLEOTIDE SEQUENCE [LARGE SCALE MRNA]</scope>
    <source>
        <tissue>Brain</tissue>
    </source>
</reference>
<reference key="4">
    <citation type="journal article" date="2002" name="Neuron">
        <title>Molecular analysis of gene expression in the developing pontocerebellar projection system.</title>
        <authorList>
            <person name="Diaz E."/>
            <person name="Ge Y."/>
            <person name="Yang Y.H."/>
            <person name="Loh K.C."/>
            <person name="Serafini T.A."/>
            <person name="Okazaki Y."/>
            <person name="Hayashizaki Y."/>
            <person name="Speed T.P."/>
            <person name="Ngai J."/>
            <person name="Scheiffele P."/>
        </authorList>
    </citation>
    <scope>TISSUE SPECIFICITY</scope>
</reference>
<reference key="5">
    <citation type="journal article" date="2010" name="Cell">
        <title>A tissue-specific atlas of mouse protein phosphorylation and expression.</title>
        <authorList>
            <person name="Huttlin E.L."/>
            <person name="Jedrychowski M.P."/>
            <person name="Elias J.E."/>
            <person name="Goswami T."/>
            <person name="Rad R."/>
            <person name="Beausoleil S.A."/>
            <person name="Villen J."/>
            <person name="Haas W."/>
            <person name="Sowa M.E."/>
            <person name="Gygi S.P."/>
        </authorList>
    </citation>
    <scope>IDENTIFICATION BY MASS SPECTROMETRY [LARGE SCALE ANALYSIS]</scope>
    <source>
        <tissue>Brain</tissue>
    </source>
</reference>
<reference key="6">
    <citation type="journal article" date="2010" name="Neuron">
        <title>SynDIG1: an activity-regulated, AMPA- receptor-interacting transmembrane protein that regulates excitatory synapse development.</title>
        <authorList>
            <person name="Kalashnikova E."/>
            <person name="Lorca R.A."/>
            <person name="Kaur I."/>
            <person name="Barisone G.A."/>
            <person name="Li B."/>
            <person name="Ishimaru T."/>
            <person name="Trimmer J.S."/>
            <person name="Mohapatra D.P."/>
            <person name="Diaz E."/>
        </authorList>
    </citation>
    <scope>TOPOLOGY</scope>
    <scope>SUBUNIT</scope>
    <scope>SUBCELLULAR LOCATION</scope>
    <scope>TISSUE SPECIFICITY</scope>
    <scope>DEVELOPMENTAL STAGE</scope>
    <scope>INTERACTION WITH GRIA1 AND GRIA2</scope>
</reference>
<reference key="7">
    <citation type="journal article" date="2012" name="PLoS ONE">
        <title>The dispanins: a novel gene family of ancient origin that contains 14 human members.</title>
        <authorList>
            <person name="Sallman Almen M."/>
            <person name="Bringeland N."/>
            <person name="Fredriksson R."/>
            <person name="Schioth H.B."/>
        </authorList>
    </citation>
    <scope>GENE FAMILY</scope>
</reference>
<evidence type="ECO:0000250" key="1"/>
<evidence type="ECO:0000250" key="2">
    <source>
        <dbReference type="UniProtKB" id="Q58DZ9"/>
    </source>
</evidence>
<evidence type="ECO:0000255" key="3"/>
<evidence type="ECO:0000269" key="4">
    <source>
    </source>
</evidence>
<evidence type="ECO:0000269" key="5">
    <source>
    </source>
</evidence>
<evidence type="ECO:0000305" key="6"/>
<comment type="function">
    <text evidence="1">May regulate AMPA receptor content at nascent synapses, and have a role in postsynaptic development and maturation.</text>
</comment>
<comment type="subunit">
    <text evidence="5">Homodimer. Interacts with GRIA1 and GRIA2.</text>
</comment>
<comment type="subcellular location">
    <subcellularLocation>
        <location evidence="5">Cell membrane</location>
        <topology evidence="5">Single-pass type II membrane protein</topology>
    </subcellularLocation>
    <subcellularLocation>
        <location evidence="5">Early endosome membrane</location>
        <topology evidence="5">Single-pass type II membrane protein</topology>
    </subcellularLocation>
    <subcellularLocation>
        <location evidence="5">Postsynaptic density membrane</location>
    </subcellularLocation>
    <subcellularLocation>
        <location evidence="1">Synapse</location>
    </subcellularLocation>
    <subcellularLocation>
        <location evidence="1">Cell projection</location>
        <location evidence="1">Dendrite</location>
    </subcellularLocation>
    <subcellularLocation>
        <location evidence="1">Cell projection</location>
        <location evidence="1">Dendritic spine</location>
    </subcellularLocation>
    <text>Shuttles between the cell surface and early endosome membrane.</text>
</comment>
<comment type="tissue specificity">
    <text evidence="4 5">Brain-specific. Expressed in Purkinje neurons in cerebellum. Also detected in the hippocampus. Found at excitatory synapses and postsynaptic cells.</text>
</comment>
<comment type="developmental stage">
    <text evidence="5">Expressed during synaptogenesis. Found at the cell surface of excitatory synapses.</text>
</comment>
<comment type="similarity">
    <text evidence="6">Belongs to the CD225/Dispanin family.</text>
</comment>
<keyword id="KW-1003">Cell membrane</keyword>
<keyword id="KW-0966">Cell projection</keyword>
<keyword id="KW-0967">Endosome</keyword>
<keyword id="KW-0472">Membrane</keyword>
<keyword id="KW-0597">Phosphoprotein</keyword>
<keyword id="KW-0628">Postsynaptic cell membrane</keyword>
<keyword id="KW-1185">Reference proteome</keyword>
<keyword id="KW-0735">Signal-anchor</keyword>
<keyword id="KW-0770">Synapse</keyword>
<keyword id="KW-0812">Transmembrane</keyword>
<keyword id="KW-1133">Transmembrane helix</keyword>
<dbReference type="EMBL" id="AL831742">
    <property type="status" value="NOT_ANNOTATED_CDS"/>
    <property type="molecule type" value="Genomic_DNA"/>
</dbReference>
<dbReference type="EMBL" id="AL845436">
    <property type="status" value="NOT_ANNOTATED_CDS"/>
    <property type="molecule type" value="Genomic_DNA"/>
</dbReference>
<dbReference type="EMBL" id="CH466519">
    <property type="protein sequence ID" value="EDL28557.1"/>
    <property type="molecule type" value="Genomic_DNA"/>
</dbReference>
<dbReference type="EMBL" id="BC147352">
    <property type="protein sequence ID" value="AAI47353.1"/>
    <property type="molecule type" value="mRNA"/>
</dbReference>
<dbReference type="EMBL" id="BC147353">
    <property type="protein sequence ID" value="AAI47354.1"/>
    <property type="molecule type" value="mRNA"/>
</dbReference>
<dbReference type="EMBL" id="BC147660">
    <property type="protein sequence ID" value="AAI47661.1"/>
    <property type="molecule type" value="mRNA"/>
</dbReference>
<dbReference type="EMBL" id="BC147661">
    <property type="protein sequence ID" value="AAI47662.1"/>
    <property type="molecule type" value="mRNA"/>
</dbReference>
<dbReference type="CCDS" id="CCDS38262.1"/>
<dbReference type="RefSeq" id="NP_001078990.1">
    <property type="nucleotide sequence ID" value="NM_001085521.2"/>
</dbReference>
<dbReference type="RefSeq" id="NP_001350023.1">
    <property type="nucleotide sequence ID" value="NM_001363094.2"/>
</dbReference>
<dbReference type="RefSeq" id="NP_001350024.1">
    <property type="nucleotide sequence ID" value="NM_001363095.1"/>
</dbReference>
<dbReference type="RefSeq" id="NP_001350025.1">
    <property type="nucleotide sequence ID" value="NM_001363096.2"/>
</dbReference>
<dbReference type="RefSeq" id="NP_001396771.1">
    <property type="nucleotide sequence ID" value="NM_001409842.1"/>
</dbReference>
<dbReference type="RefSeq" id="NP_001396773.1">
    <property type="nucleotide sequence ID" value="NM_001409844.1"/>
</dbReference>
<dbReference type="RefSeq" id="NP_001396774.1">
    <property type="nucleotide sequence ID" value="NM_001409845.1"/>
</dbReference>
<dbReference type="RefSeq" id="XP_006499937.1">
    <property type="nucleotide sequence ID" value="XM_006499874.3"/>
</dbReference>
<dbReference type="RefSeq" id="XP_011237987.1">
    <property type="nucleotide sequence ID" value="XM_011239685.2"/>
</dbReference>
<dbReference type="RefSeq" id="XP_011237989.1">
    <property type="nucleotide sequence ID" value="XM_011239687.2"/>
</dbReference>
<dbReference type="FunCoup" id="A2ANU3">
    <property type="interactions" value="235"/>
</dbReference>
<dbReference type="STRING" id="10090.ENSMUSP00000105560"/>
<dbReference type="iPTMnet" id="A2ANU3"/>
<dbReference type="PhosphoSitePlus" id="A2ANU3"/>
<dbReference type="SwissPalm" id="A2ANU3"/>
<dbReference type="PaxDb" id="10090-ENSMUSP00000105561"/>
<dbReference type="PeptideAtlas" id="A2ANU3"/>
<dbReference type="ProteomicsDB" id="254708"/>
<dbReference type="ABCD" id="A2ANU3">
    <property type="antibodies" value="1 sequenced antibody"/>
</dbReference>
<dbReference type="Antibodypedia" id="62829">
    <property type="antibodies" value="36 antibodies from 14 providers"/>
</dbReference>
<dbReference type="Ensembl" id="ENSMUST00000109934.2">
    <property type="protein sequence ID" value="ENSMUSP00000105560.2"/>
    <property type="gene ID" value="ENSMUSG00000074736.11"/>
</dbReference>
<dbReference type="Ensembl" id="ENSMUST00000109935.8">
    <property type="protein sequence ID" value="ENSMUSP00000105561.2"/>
    <property type="gene ID" value="ENSMUSG00000074736.11"/>
</dbReference>
<dbReference type="GeneID" id="433485"/>
<dbReference type="KEGG" id="mmu:433485"/>
<dbReference type="UCSC" id="uc012cfp.1">
    <property type="organism name" value="mouse"/>
</dbReference>
<dbReference type="AGR" id="MGI:3702158"/>
<dbReference type="CTD" id="79953"/>
<dbReference type="MGI" id="MGI:3702158">
    <property type="gene designation" value="Syndig1"/>
</dbReference>
<dbReference type="VEuPathDB" id="HostDB:ENSMUSG00000074736"/>
<dbReference type="eggNOG" id="ENOG502QQXK">
    <property type="taxonomic scope" value="Eukaryota"/>
</dbReference>
<dbReference type="GeneTree" id="ENSGT00950000183147"/>
<dbReference type="HOGENOM" id="CLU_094250_0_0_1"/>
<dbReference type="InParanoid" id="A2ANU3"/>
<dbReference type="OMA" id="SWGDGMA"/>
<dbReference type="OrthoDB" id="8440917at2759"/>
<dbReference type="PhylomeDB" id="A2ANU3"/>
<dbReference type="TreeFam" id="TF331357"/>
<dbReference type="BioGRID-ORCS" id="433485">
    <property type="hits" value="4 hits in 78 CRISPR screens"/>
</dbReference>
<dbReference type="ChiTaRS" id="Syndig1">
    <property type="organism name" value="mouse"/>
</dbReference>
<dbReference type="PRO" id="PR:A2ANU3"/>
<dbReference type="Proteomes" id="UP000000589">
    <property type="component" value="Chromosome 2"/>
</dbReference>
<dbReference type="RNAct" id="A2ANU3">
    <property type="molecule type" value="protein"/>
</dbReference>
<dbReference type="Bgee" id="ENSMUSG00000074736">
    <property type="expression patterns" value="Expressed in cerebellum lobe and 99 other cell types or tissues"/>
</dbReference>
<dbReference type="ExpressionAtlas" id="A2ANU3">
    <property type="expression patterns" value="baseline and differential"/>
</dbReference>
<dbReference type="GO" id="GO:0044297">
    <property type="term" value="C:cell body"/>
    <property type="evidence" value="ECO:0000250"/>
    <property type="project" value="UniProtKB"/>
</dbReference>
<dbReference type="GO" id="GO:0043198">
    <property type="term" value="C:dendritic shaft"/>
    <property type="evidence" value="ECO:0000250"/>
    <property type="project" value="UniProtKB"/>
</dbReference>
<dbReference type="GO" id="GO:0043197">
    <property type="term" value="C:dendritic spine"/>
    <property type="evidence" value="ECO:0000250"/>
    <property type="project" value="UniProtKB"/>
</dbReference>
<dbReference type="GO" id="GO:0031901">
    <property type="term" value="C:early endosome membrane"/>
    <property type="evidence" value="ECO:0000314"/>
    <property type="project" value="UniProtKB"/>
</dbReference>
<dbReference type="GO" id="GO:0060076">
    <property type="term" value="C:excitatory synapse"/>
    <property type="evidence" value="ECO:0000250"/>
    <property type="project" value="UniProtKB"/>
</dbReference>
<dbReference type="GO" id="GO:0098978">
    <property type="term" value="C:glutamatergic synapse"/>
    <property type="evidence" value="ECO:0007669"/>
    <property type="project" value="Ensembl"/>
</dbReference>
<dbReference type="GO" id="GO:0005886">
    <property type="term" value="C:plasma membrane"/>
    <property type="evidence" value="ECO:0000314"/>
    <property type="project" value="UniProtKB"/>
</dbReference>
<dbReference type="GO" id="GO:0014069">
    <property type="term" value="C:postsynaptic density"/>
    <property type="evidence" value="ECO:0000314"/>
    <property type="project" value="UniProtKB"/>
</dbReference>
<dbReference type="GO" id="GO:0098839">
    <property type="term" value="C:postsynaptic density membrane"/>
    <property type="evidence" value="ECO:0000314"/>
    <property type="project" value="MGI"/>
</dbReference>
<dbReference type="GO" id="GO:0030672">
    <property type="term" value="C:synaptic vesicle membrane"/>
    <property type="evidence" value="ECO:0000314"/>
    <property type="project" value="MGI"/>
</dbReference>
<dbReference type="GO" id="GO:0035254">
    <property type="term" value="F:glutamate receptor binding"/>
    <property type="evidence" value="ECO:0000353"/>
    <property type="project" value="UniProtKB"/>
</dbReference>
<dbReference type="GO" id="GO:0042803">
    <property type="term" value="F:protein homodimerization activity"/>
    <property type="evidence" value="ECO:0000314"/>
    <property type="project" value="UniProtKB"/>
</dbReference>
<dbReference type="GO" id="GO:0006886">
    <property type="term" value="P:intracellular protein transport"/>
    <property type="evidence" value="ECO:0000314"/>
    <property type="project" value="UniProtKB"/>
</dbReference>
<dbReference type="GO" id="GO:0051965">
    <property type="term" value="P:positive regulation of synapse assembly"/>
    <property type="evidence" value="ECO:0000314"/>
    <property type="project" value="UniProtKB"/>
</dbReference>
<dbReference type="GO" id="GO:0150052">
    <property type="term" value="P:regulation of postsynapse assembly"/>
    <property type="evidence" value="ECO:0007669"/>
    <property type="project" value="Ensembl"/>
</dbReference>
<dbReference type="GO" id="GO:0097091">
    <property type="term" value="P:synaptic vesicle clustering"/>
    <property type="evidence" value="ECO:0000250"/>
    <property type="project" value="UniProtKB"/>
</dbReference>
<dbReference type="InterPro" id="IPR007593">
    <property type="entry name" value="CD225/Dispanin_fam"/>
</dbReference>
<dbReference type="PANTHER" id="PTHR14768:SF3">
    <property type="entry name" value="SYNAPSE DIFFERENTIATION-INDUCING GENE PROTEIN 1"/>
    <property type="match status" value="1"/>
</dbReference>
<dbReference type="PANTHER" id="PTHR14768">
    <property type="entry name" value="UPF0338 PROTEIN"/>
    <property type="match status" value="1"/>
</dbReference>
<dbReference type="Pfam" id="PF04505">
    <property type="entry name" value="CD225"/>
    <property type="match status" value="1"/>
</dbReference>
<protein>
    <recommendedName>
        <fullName>Synapse differentiation-inducing gene protein 1</fullName>
        <shortName>SynDIG1</shortName>
    </recommendedName>
    <alternativeName>
        <fullName>Dispanin subfamily C member 2</fullName>
        <shortName>DSPC2</shortName>
    </alternativeName>
    <alternativeName>
        <fullName>Transmembrane protein 90B</fullName>
    </alternativeName>
</protein>
<sequence length="258" mass="28456">MDGIIEQKSVLVHSKISDAGKRNGLINTRNFMAESRDGLVSVYPAPQYQSHRLVASAAPGSLEGGRSEPVQQLLDPNTLQQSVESHYRPNIILYSDGVLRSWGDGVATDCCETTFIEDRSPTKDSLEYPDGKFIDLSGDDIKIHTLSYDVEEEEELQELESDYSSDTESEDNFLMMPPRDHLGLSVFSMLCCFWPLGIAAFYLSHETNKAVAKGDFHQASTSSRRALFLAVLSITIGTGIYVGVAVALIAYLSKNNHL</sequence>
<organism>
    <name type="scientific">Mus musculus</name>
    <name type="common">Mouse</name>
    <dbReference type="NCBI Taxonomy" id="10090"/>
    <lineage>
        <taxon>Eukaryota</taxon>
        <taxon>Metazoa</taxon>
        <taxon>Chordata</taxon>
        <taxon>Craniata</taxon>
        <taxon>Vertebrata</taxon>
        <taxon>Euteleostomi</taxon>
        <taxon>Mammalia</taxon>
        <taxon>Eutheria</taxon>
        <taxon>Euarchontoglires</taxon>
        <taxon>Glires</taxon>
        <taxon>Rodentia</taxon>
        <taxon>Myomorpha</taxon>
        <taxon>Muroidea</taxon>
        <taxon>Muridae</taxon>
        <taxon>Murinae</taxon>
        <taxon>Mus</taxon>
        <taxon>Mus</taxon>
    </lineage>
</organism>
<gene>
    <name type="primary">Syndig1</name>
    <name type="synonym">Tmem90b</name>
</gene>
<accession>A2ANU3</accession>
<feature type="chain" id="PRO_0000394033" description="Synapse differentiation-inducing gene protein 1">
    <location>
        <begin position="1"/>
        <end position="258"/>
    </location>
</feature>
<feature type="topological domain" description="Cytoplasmic" evidence="3">
    <location>
        <begin position="1"/>
        <end position="181"/>
    </location>
</feature>
<feature type="transmembrane region" description="Helical" evidence="3">
    <location>
        <begin position="182"/>
        <end position="202"/>
    </location>
</feature>
<feature type="topological domain" description="Extracellular" evidence="3">
    <location>
        <begin position="203"/>
        <end position="228"/>
    </location>
</feature>
<feature type="intramembrane region" description="Helical" evidence="3">
    <location>
        <begin position="229"/>
        <end position="249"/>
    </location>
</feature>
<feature type="topological domain" description="Extracellular" evidence="3">
    <location>
        <begin position="250"/>
        <end position="258"/>
    </location>
</feature>
<feature type="modified residue" description="Phosphoserine" evidence="2">
    <location>
        <position position="137"/>
    </location>
</feature>
<name>SYNG1_MOUSE</name>
<proteinExistence type="evidence at protein level"/>